<organism>
    <name type="scientific">Mus musculus</name>
    <name type="common">Mouse</name>
    <dbReference type="NCBI Taxonomy" id="10090"/>
    <lineage>
        <taxon>Eukaryota</taxon>
        <taxon>Metazoa</taxon>
        <taxon>Chordata</taxon>
        <taxon>Craniata</taxon>
        <taxon>Vertebrata</taxon>
        <taxon>Euteleostomi</taxon>
        <taxon>Mammalia</taxon>
        <taxon>Eutheria</taxon>
        <taxon>Euarchontoglires</taxon>
        <taxon>Glires</taxon>
        <taxon>Rodentia</taxon>
        <taxon>Myomorpha</taxon>
        <taxon>Muroidea</taxon>
        <taxon>Muridae</taxon>
        <taxon>Murinae</taxon>
        <taxon>Mus</taxon>
        <taxon>Mus</taxon>
    </lineage>
</organism>
<sequence length="1479" mass="170651">MAPLLGRKPFPLVKPLPGEEPLFTIPHTQEAFRTREEYEARLERYSERIWTCKSTGSSQLTHKEAWEEEQEVAELLKEEFPNWYEKLVLEMVHHNTASLEKLVDSAWLEIMTKYAVGEECDFEVGKEKMLKVKIVKIHPLEKVDEEAVEKKSDGACDSPSSDKENSSQMAQDLQKKETVVKEDEGRRESINDRARRSPRKLPTSLKKGERKWAPPKFLPHKYDVKLQNEDKIISNVPADSLIRTERPPNKEILRYFIRHNALRAGTGENAPWVVEDELVKKYSLPSKFSDFLLDPYKYMTLNPSTKRRNTGSPDRKPSKKPKRDSSSLSSPLNPKLWCHVHLEKSLNGPPLKVKNSKNSKSPEEHLEGVMKIMSPNNNKLHSFHIPKKGPAAKKPGKHSDKPLKAKGRGKGILNGQKSTGNSKSPSKCVKTPKTKMKQMTLLDMAKGTQKMTRTPRSSGGVPRSSGKPHKHLPPAALHLIAYYKENKDKEDKKSALSCVISKTARLLSNEDRARLPEELRALVQKRYELLEHKKRWASMSEEQRKEYLKKKRQELKERLREKAKERREREMLERLEKQKRFEDQELGGRNLPAFRLVDTPEGLPNTLFGDVALVVEFLSCYSGLLLPDAQYPITAVSLMEALSADKGGFLYLNRVLVILLQTLLQDEIAEDYGELGMKLSEIPLTLHSVSELVRLCLRRCDVQEDSEGSETDDNKDSTPFEDNEVQDEFLEKLETSEFFELTSEEKLRILTALCHRILMTYSVQDHMETRQQVSAELWKERLAVLKEENDKKRAEKQKRKEMEARNKENGKEENVLGKVDRKKEIVKIEQQVEVEADDMISAVKSRRLLSMQAKRKREIQERETKVRLEREAEEERMRKHKAAAEKAFQEGIAKAKLVLRRTPIGTDRNHNRYWLFSNEVPGLFIEKGWVHNSIDYRFKHHRKDHSNLPDDDYCPRSKKANLGKNASVNAHHGPALEAVETTVPKQGQNLWFLCDSQKELDELLSCLHPQGIRESQLKERLEKRYQEITHSIYLARKPNLGLKSCDGNQELLNFLRSDLIEVATRLQKGGLGYMEGTSEFEARVISLEKLKDFGECVIALQASVIKKFLQGFMAPKQKKRKLQSEDSTKSEEVDEEKKMVEEAKVASALEKWKTAIREAQTFSRMHVLLGMLDACIKWDMSAENARCKVCRKKGEDDKLILCDECNKAFHLFCLRPALYEVPDGEWQCPACQPPTARRNSRGRNYTEESTSEGSEGDESGEEEEEEEEEEEEEEDYEVAGLRLRPRKTIRGKQSVIPAARPGRPPGKKSHPARRSRPKDDPEVDDLVLQTKRISRRQSLELQKCEDILHKLVKYRFSWPFREPVTRDEAEDYYDVIEHPMDFQTIQNKCSCGNYRSVQEFLTDMKQVFANAELYNCRGSHVLSCMEKTEQCLLALLQKHLPGHPYVRRKRRKFPDRLADDEGDSDSESVGQSRGRRQKK</sequence>
<keyword id="KW-0007">Acetylation</keyword>
<keyword id="KW-0025">Alternative splicing</keyword>
<keyword id="KW-0067">ATP-binding</keyword>
<keyword id="KW-0103">Bromodomain</keyword>
<keyword id="KW-0175">Coiled coil</keyword>
<keyword id="KW-0227">DNA damage</keyword>
<keyword id="KW-1017">Isopeptide bond</keyword>
<keyword id="KW-0418">Kinase</keyword>
<keyword id="KW-0479">Metal-binding</keyword>
<keyword id="KW-0547">Nucleotide-binding</keyword>
<keyword id="KW-0539">Nucleus</keyword>
<keyword id="KW-0597">Phosphoprotein</keyword>
<keyword id="KW-1185">Reference proteome</keyword>
<keyword id="KW-0804">Transcription</keyword>
<keyword id="KW-0805">Transcription regulation</keyword>
<keyword id="KW-0808">Transferase</keyword>
<keyword id="KW-0829">Tyrosine-protein kinase</keyword>
<keyword id="KW-0832">Ubl conjugation</keyword>
<keyword id="KW-0862">Zinc</keyword>
<keyword id="KW-0863">Zinc-finger</keyword>
<name>BAZ1B_MOUSE</name>
<evidence type="ECO:0000250" key="1">
    <source>
        <dbReference type="UniProtKB" id="Q9UIG0"/>
    </source>
</evidence>
<evidence type="ECO:0000255" key="2"/>
<evidence type="ECO:0000255" key="3">
    <source>
        <dbReference type="PROSITE-ProRule" id="PRU00035"/>
    </source>
</evidence>
<evidence type="ECO:0000255" key="4">
    <source>
        <dbReference type="PROSITE-ProRule" id="PRU00063"/>
    </source>
</evidence>
<evidence type="ECO:0000255" key="5">
    <source>
        <dbReference type="PROSITE-ProRule" id="PRU00146"/>
    </source>
</evidence>
<evidence type="ECO:0000255" key="6">
    <source>
        <dbReference type="PROSITE-ProRule" id="PRU00475"/>
    </source>
</evidence>
<evidence type="ECO:0000256" key="7">
    <source>
        <dbReference type="SAM" id="MobiDB-lite"/>
    </source>
</evidence>
<evidence type="ECO:0000269" key="8">
    <source>
    </source>
</evidence>
<evidence type="ECO:0000269" key="9">
    <source>
    </source>
</evidence>
<evidence type="ECO:0000269" key="10">
    <source>
    </source>
</evidence>
<evidence type="ECO:0000303" key="11">
    <source>
    </source>
</evidence>
<evidence type="ECO:0000305" key="12"/>
<evidence type="ECO:0007744" key="13">
    <source>
    </source>
</evidence>
<evidence type="ECO:0007744" key="14">
    <source>
    </source>
</evidence>
<evidence type="ECO:0007744" key="15">
    <source>
    </source>
</evidence>
<evidence type="ECO:0007744" key="16">
    <source>
    </source>
</evidence>
<proteinExistence type="evidence at protein level"/>
<protein>
    <recommendedName>
        <fullName>Tyrosine-protein kinase BAZ1B</fullName>
        <ecNumber evidence="1">2.7.10.2</ecNumber>
    </recommendedName>
    <alternativeName>
        <fullName>Bromodomain adjacent to zinc finger domain protein 1B</fullName>
    </alternativeName>
    <alternativeName>
        <fullName>Williams syndrome transcription factor homolog</fullName>
    </alternativeName>
    <alternativeName>
        <fullName>Williams-Beuren syndrome chromosomal region 9 protein homolog</fullName>
    </alternativeName>
</protein>
<reference key="1">
    <citation type="journal article" date="1998" name="Cytogenet. Cell Genet.">
        <title>Identification of the WBSCR9 gene, encoding a novel transcriptional regulator, in the Williams-Beuren syndrome deletion at 7q11.23.</title>
        <authorList>
            <person name="Peoples R.J."/>
            <person name="Cisco M.J."/>
            <person name="Kaplan P."/>
            <person name="Francke U."/>
        </authorList>
    </citation>
    <scope>NUCLEOTIDE SEQUENCE [MRNA]</scope>
</reference>
<reference key="2">
    <citation type="submission" date="2005-09" db="EMBL/GenBank/DDBJ databases">
        <authorList>
            <person name="Mural R.J."/>
            <person name="Adams M.D."/>
            <person name="Myers E.W."/>
            <person name="Smith H.O."/>
            <person name="Venter J.C."/>
        </authorList>
    </citation>
    <scope>NUCLEOTIDE SEQUENCE [LARGE SCALE GENOMIC DNA]</scope>
</reference>
<reference key="3">
    <citation type="journal article" date="2004" name="Genome Res.">
        <title>The status, quality, and expansion of the NIH full-length cDNA project: the Mammalian Gene Collection (MGC).</title>
        <authorList>
            <consortium name="The MGC Project Team"/>
        </authorList>
    </citation>
    <scope>NUCLEOTIDE SEQUENCE [LARGE SCALE MRNA]</scope>
    <source>
        <tissue>Brain</tissue>
    </source>
</reference>
<reference key="4">
    <citation type="journal article" date="2005" name="Science">
        <title>The transcriptional landscape of the mammalian genome.</title>
        <authorList>
            <person name="Carninci P."/>
            <person name="Kasukawa T."/>
            <person name="Katayama S."/>
            <person name="Gough J."/>
            <person name="Frith M.C."/>
            <person name="Maeda N."/>
            <person name="Oyama R."/>
            <person name="Ravasi T."/>
            <person name="Lenhard B."/>
            <person name="Wells C."/>
            <person name="Kodzius R."/>
            <person name="Shimokawa K."/>
            <person name="Bajic V.B."/>
            <person name="Brenner S.E."/>
            <person name="Batalov S."/>
            <person name="Forrest A.R."/>
            <person name="Zavolan M."/>
            <person name="Davis M.J."/>
            <person name="Wilming L.G."/>
            <person name="Aidinis V."/>
            <person name="Allen J.E."/>
            <person name="Ambesi-Impiombato A."/>
            <person name="Apweiler R."/>
            <person name="Aturaliya R.N."/>
            <person name="Bailey T.L."/>
            <person name="Bansal M."/>
            <person name="Baxter L."/>
            <person name="Beisel K.W."/>
            <person name="Bersano T."/>
            <person name="Bono H."/>
            <person name="Chalk A.M."/>
            <person name="Chiu K.P."/>
            <person name="Choudhary V."/>
            <person name="Christoffels A."/>
            <person name="Clutterbuck D.R."/>
            <person name="Crowe M.L."/>
            <person name="Dalla E."/>
            <person name="Dalrymple B.P."/>
            <person name="de Bono B."/>
            <person name="Della Gatta G."/>
            <person name="di Bernardo D."/>
            <person name="Down T."/>
            <person name="Engstrom P."/>
            <person name="Fagiolini M."/>
            <person name="Faulkner G."/>
            <person name="Fletcher C.F."/>
            <person name="Fukushima T."/>
            <person name="Furuno M."/>
            <person name="Futaki S."/>
            <person name="Gariboldi M."/>
            <person name="Georgii-Hemming P."/>
            <person name="Gingeras T.R."/>
            <person name="Gojobori T."/>
            <person name="Green R.E."/>
            <person name="Gustincich S."/>
            <person name="Harbers M."/>
            <person name="Hayashi Y."/>
            <person name="Hensch T.K."/>
            <person name="Hirokawa N."/>
            <person name="Hill D."/>
            <person name="Huminiecki L."/>
            <person name="Iacono M."/>
            <person name="Ikeo K."/>
            <person name="Iwama A."/>
            <person name="Ishikawa T."/>
            <person name="Jakt M."/>
            <person name="Kanapin A."/>
            <person name="Katoh M."/>
            <person name="Kawasawa Y."/>
            <person name="Kelso J."/>
            <person name="Kitamura H."/>
            <person name="Kitano H."/>
            <person name="Kollias G."/>
            <person name="Krishnan S.P."/>
            <person name="Kruger A."/>
            <person name="Kummerfeld S.K."/>
            <person name="Kurochkin I.V."/>
            <person name="Lareau L.F."/>
            <person name="Lazarevic D."/>
            <person name="Lipovich L."/>
            <person name="Liu J."/>
            <person name="Liuni S."/>
            <person name="McWilliam S."/>
            <person name="Madan Babu M."/>
            <person name="Madera M."/>
            <person name="Marchionni L."/>
            <person name="Matsuda H."/>
            <person name="Matsuzawa S."/>
            <person name="Miki H."/>
            <person name="Mignone F."/>
            <person name="Miyake S."/>
            <person name="Morris K."/>
            <person name="Mottagui-Tabar S."/>
            <person name="Mulder N."/>
            <person name="Nakano N."/>
            <person name="Nakauchi H."/>
            <person name="Ng P."/>
            <person name="Nilsson R."/>
            <person name="Nishiguchi S."/>
            <person name="Nishikawa S."/>
            <person name="Nori F."/>
            <person name="Ohara O."/>
            <person name="Okazaki Y."/>
            <person name="Orlando V."/>
            <person name="Pang K.C."/>
            <person name="Pavan W.J."/>
            <person name="Pavesi G."/>
            <person name="Pesole G."/>
            <person name="Petrovsky N."/>
            <person name="Piazza S."/>
            <person name="Reed J."/>
            <person name="Reid J.F."/>
            <person name="Ring B.Z."/>
            <person name="Ringwald M."/>
            <person name="Rost B."/>
            <person name="Ruan Y."/>
            <person name="Salzberg S.L."/>
            <person name="Sandelin A."/>
            <person name="Schneider C."/>
            <person name="Schoenbach C."/>
            <person name="Sekiguchi K."/>
            <person name="Semple C.A."/>
            <person name="Seno S."/>
            <person name="Sessa L."/>
            <person name="Sheng Y."/>
            <person name="Shibata Y."/>
            <person name="Shimada H."/>
            <person name="Shimada K."/>
            <person name="Silva D."/>
            <person name="Sinclair B."/>
            <person name="Sperling S."/>
            <person name="Stupka E."/>
            <person name="Sugiura K."/>
            <person name="Sultana R."/>
            <person name="Takenaka Y."/>
            <person name="Taki K."/>
            <person name="Tammoja K."/>
            <person name="Tan S.L."/>
            <person name="Tang S."/>
            <person name="Taylor M.S."/>
            <person name="Tegner J."/>
            <person name="Teichmann S.A."/>
            <person name="Ueda H.R."/>
            <person name="van Nimwegen E."/>
            <person name="Verardo R."/>
            <person name="Wei C.L."/>
            <person name="Yagi K."/>
            <person name="Yamanishi H."/>
            <person name="Zabarovsky E."/>
            <person name="Zhu S."/>
            <person name="Zimmer A."/>
            <person name="Hide W."/>
            <person name="Bult C."/>
            <person name="Grimmond S.M."/>
            <person name="Teasdale R.D."/>
            <person name="Liu E.T."/>
            <person name="Brusic V."/>
            <person name="Quackenbush J."/>
            <person name="Wahlestedt C."/>
            <person name="Mattick J.S."/>
            <person name="Hume D.A."/>
            <person name="Kai C."/>
            <person name="Sasaki D."/>
            <person name="Tomaru Y."/>
            <person name="Fukuda S."/>
            <person name="Kanamori-Katayama M."/>
            <person name="Suzuki M."/>
            <person name="Aoki J."/>
            <person name="Arakawa T."/>
            <person name="Iida J."/>
            <person name="Imamura K."/>
            <person name="Itoh M."/>
            <person name="Kato T."/>
            <person name="Kawaji H."/>
            <person name="Kawagashira N."/>
            <person name="Kawashima T."/>
            <person name="Kojima M."/>
            <person name="Kondo S."/>
            <person name="Konno H."/>
            <person name="Nakano K."/>
            <person name="Ninomiya N."/>
            <person name="Nishio T."/>
            <person name="Okada M."/>
            <person name="Plessy C."/>
            <person name="Shibata K."/>
            <person name="Shiraki T."/>
            <person name="Suzuki S."/>
            <person name="Tagami M."/>
            <person name="Waki K."/>
            <person name="Watahiki A."/>
            <person name="Okamura-Oho Y."/>
            <person name="Suzuki H."/>
            <person name="Kawai J."/>
            <person name="Hayashizaki Y."/>
        </authorList>
    </citation>
    <scope>NUCLEOTIDE SEQUENCE [LARGE SCALE MRNA] OF 1-810 AND 823-1799 (ISOFORM 1)</scope>
    <scope>NUCLEOTIDE SEQUENCE [LARGE SCALE MRNA] OF 1-786 (ISOFORM 2)</scope>
    <source>
        <strain>C57BL/6J</strain>
        <tissue>Corpora quadrigemina</tissue>
        <tissue>Thymus</tissue>
        <tissue>Urinary bladder</tissue>
    </source>
</reference>
<reference key="5">
    <citation type="journal article" date="2002" name="EMBO J.">
        <title>WSTF-ISWI chromatin remodeling complex targets heterochromatic replication foci.</title>
        <authorList>
            <person name="Bozhenok L."/>
            <person name="Wade P.A."/>
            <person name="Varga-Weisz P."/>
        </authorList>
    </citation>
    <scope>FUNCTION</scope>
    <scope>IDENTIFICATION IN THE WICH-5 ISWI CHROMATIN-REMODELING COMPLEX</scope>
    <scope>INTERACTION WITH SMARCA5</scope>
</reference>
<reference key="6">
    <citation type="journal article" date="2006" name="EMBO Rep.">
        <title>The chromatin remodelling complex WSTF-SNF2h interacts with nuclear myosin 1 and has a role in RNA polymerase I transcription.</title>
        <authorList>
            <person name="Percipalle P."/>
            <person name="Fomproix N."/>
            <person name="Cavellan E."/>
            <person name="Voit R."/>
            <person name="Reimer G."/>
            <person name="Krueger T."/>
            <person name="Thyberg J."/>
            <person name="Scheer U."/>
            <person name="Grummt I."/>
            <person name="Oestlund Farrants A.-K.O."/>
        </authorList>
    </citation>
    <scope>FUNCTION</scope>
    <scope>INTERACTION WITH MYO1C</scope>
</reference>
<reference key="7">
    <citation type="journal article" date="2007" name="Proc. Natl. Acad. Sci. U.S.A.">
        <title>Large-scale phosphorylation analysis of mouse liver.</title>
        <authorList>
            <person name="Villen J."/>
            <person name="Beausoleil S.A."/>
            <person name="Gerber S.A."/>
            <person name="Gygi S.P."/>
        </authorList>
    </citation>
    <scope>PHOSPHORYLATION [LARGE SCALE ANALYSIS] AT SER-161</scope>
    <scope>IDENTIFICATION BY MASS SPECTROMETRY [LARGE SCALE ANALYSIS]</scope>
    <source>
        <tissue>Liver</tissue>
    </source>
</reference>
<reference key="8">
    <citation type="journal article" date="2009" name="Immunity">
        <title>The phagosomal proteome in interferon-gamma-activated macrophages.</title>
        <authorList>
            <person name="Trost M."/>
            <person name="English L."/>
            <person name="Lemieux S."/>
            <person name="Courcelles M."/>
            <person name="Desjardins M."/>
            <person name="Thibault P."/>
        </authorList>
    </citation>
    <scope>PHOSPHORYLATION [LARGE SCALE ANALYSIS] AT SER-361 AND SER-1464</scope>
    <scope>IDENTIFICATION BY MASS SPECTROMETRY [LARGE SCALE ANALYSIS]</scope>
</reference>
<reference key="9">
    <citation type="journal article" date="2009" name="Nature">
        <title>WSTF regulates the H2A.X DNA damage response via a novel tyrosine kinase activity.</title>
        <authorList>
            <person name="Xiao A."/>
            <person name="Li H."/>
            <person name="Shechter D."/>
            <person name="Ahn S.H."/>
            <person name="Fabrizio L.A."/>
            <person name="Erdjument-Bromage H."/>
            <person name="Ishibe-Murakami S."/>
            <person name="Wang B."/>
            <person name="Tempst P."/>
            <person name="Hofmann K."/>
            <person name="Patel D.J."/>
            <person name="Elledge S.J."/>
            <person name="Allis C.D."/>
        </authorList>
    </citation>
    <scope>FUNCTION</scope>
    <scope>IDENTIFICATION BY MASS SPECTROMETRY</scope>
    <scope>INTERACTION WITH SMARCA5</scope>
</reference>
<reference key="10">
    <citation type="journal article" date="2010" name="Cell">
        <title>A tissue-specific atlas of mouse protein phosphorylation and expression.</title>
        <authorList>
            <person name="Huttlin E.L."/>
            <person name="Jedrychowski M.P."/>
            <person name="Elias J.E."/>
            <person name="Goswami T."/>
            <person name="Rad R."/>
            <person name="Beausoleil S.A."/>
            <person name="Villen J."/>
            <person name="Haas W."/>
            <person name="Sowa M.E."/>
            <person name="Gygi S.P."/>
        </authorList>
    </citation>
    <scope>PHOSPHORYLATION [LARGE SCALE ANALYSIS] AT SER-152; SER-158; SER-161; SER-325; SER-706; SER-709; SER-1464; SER-1466 AND SER-1468</scope>
    <scope>IDENTIFICATION BY MASS SPECTROMETRY [LARGE SCALE ANALYSIS]</scope>
    <source>
        <tissue>Brain</tissue>
        <tissue>Brown adipose tissue</tissue>
        <tissue>Heart</tissue>
        <tissue>Kidney</tissue>
        <tissue>Liver</tissue>
        <tissue>Lung</tissue>
        <tissue>Pancreas</tissue>
        <tissue>Spleen</tissue>
        <tissue>Testis</tissue>
    </source>
</reference>
<reference key="11">
    <citation type="journal article" date="2013" name="Mol. Cell">
        <title>SIRT5-mediated lysine desuccinylation impacts diverse metabolic pathways.</title>
        <authorList>
            <person name="Park J."/>
            <person name="Chen Y."/>
            <person name="Tishkoff D.X."/>
            <person name="Peng C."/>
            <person name="Tan M."/>
            <person name="Dai L."/>
            <person name="Xie Z."/>
            <person name="Zhang Y."/>
            <person name="Zwaans B.M."/>
            <person name="Skinner M.E."/>
            <person name="Lombard D.B."/>
            <person name="Zhao Y."/>
        </authorList>
    </citation>
    <scope>ACETYLATION [LARGE SCALE ANALYSIS] AT LYS-1331</scope>
    <scope>IDENTIFICATION BY MASS SPECTROMETRY [LARGE SCALE ANALYSIS]</scope>
    <source>
        <tissue>Embryonic fibroblast</tissue>
    </source>
</reference>
<feature type="chain" id="PRO_0000211171" description="Tyrosine-protein kinase BAZ1B">
    <location>
        <begin position="1"/>
        <end position="1479"/>
    </location>
</feature>
<feature type="domain" description="WAC" evidence="6">
    <location>
        <begin position="20"/>
        <end position="126"/>
    </location>
</feature>
<feature type="domain" description="DDT" evidence="4">
    <location>
        <begin position="605"/>
        <end position="669"/>
    </location>
</feature>
<feature type="domain" description="Bromo" evidence="3">
    <location>
        <begin position="1335"/>
        <end position="1439"/>
    </location>
</feature>
<feature type="zinc finger region" description="PHD-type" evidence="5">
    <location>
        <begin position="1184"/>
        <end position="1234"/>
    </location>
</feature>
<feature type="region of interest" description="Disordered" evidence="7">
    <location>
        <begin position="146"/>
        <end position="212"/>
    </location>
</feature>
<feature type="region of interest" description="Disordered" evidence="7">
    <location>
        <begin position="302"/>
        <end position="333"/>
    </location>
</feature>
<feature type="region of interest" description="Disordered" evidence="7">
    <location>
        <begin position="376"/>
        <end position="433"/>
    </location>
</feature>
<feature type="region of interest" description="Disordered" evidence="7">
    <location>
        <begin position="448"/>
        <end position="472"/>
    </location>
</feature>
<feature type="region of interest" description="Disordered" evidence="7">
    <location>
        <begin position="789"/>
        <end position="813"/>
    </location>
</feature>
<feature type="region of interest" description="Disordered" evidence="7">
    <location>
        <begin position="1231"/>
        <end position="1324"/>
    </location>
</feature>
<feature type="region of interest" description="Disordered" evidence="7">
    <location>
        <begin position="1451"/>
        <end position="1479"/>
    </location>
</feature>
<feature type="coiled-coil region" evidence="2">
    <location>
        <begin position="537"/>
        <end position="587"/>
    </location>
</feature>
<feature type="coiled-coil region" evidence="2">
    <location>
        <begin position="774"/>
        <end position="809"/>
    </location>
</feature>
<feature type="coiled-coil region" evidence="2">
    <location>
        <begin position="854"/>
        <end position="890"/>
    </location>
</feature>
<feature type="coiled-coil region" evidence="2">
    <location>
        <begin position="1257"/>
        <end position="1284"/>
    </location>
</feature>
<feature type="short sequence motif" description="C motif">
    <location>
        <begin position="207"/>
        <end position="213"/>
    </location>
</feature>
<feature type="compositionally biased region" description="Basic and acidic residues" evidence="7">
    <location>
        <begin position="148"/>
        <end position="165"/>
    </location>
</feature>
<feature type="compositionally biased region" description="Basic and acidic residues" evidence="7">
    <location>
        <begin position="173"/>
        <end position="195"/>
    </location>
</feature>
<feature type="compositionally biased region" description="Basic residues" evidence="7">
    <location>
        <begin position="381"/>
        <end position="396"/>
    </location>
</feature>
<feature type="compositionally biased region" description="Polar residues" evidence="7">
    <location>
        <begin position="415"/>
        <end position="425"/>
    </location>
</feature>
<feature type="compositionally biased region" description="Low complexity" evidence="7">
    <location>
        <begin position="454"/>
        <end position="465"/>
    </location>
</feature>
<feature type="compositionally biased region" description="Acidic residues" evidence="7">
    <location>
        <begin position="1254"/>
        <end position="1277"/>
    </location>
</feature>
<feature type="compositionally biased region" description="Basic residues" evidence="7">
    <location>
        <begin position="1305"/>
        <end position="1316"/>
    </location>
</feature>
<feature type="modified residue" description="Phosphoserine" evidence="15">
    <location>
        <position position="152"/>
    </location>
</feature>
<feature type="modified residue" description="Phosphoserine" evidence="15">
    <location>
        <position position="158"/>
    </location>
</feature>
<feature type="modified residue" description="Phosphoserine" evidence="13 15">
    <location>
        <position position="161"/>
    </location>
</feature>
<feature type="modified residue" description="Phosphothreonine" evidence="1">
    <location>
        <position position="266"/>
    </location>
</feature>
<feature type="modified residue" description="Phosphoserine" evidence="15">
    <location>
        <position position="325"/>
    </location>
</feature>
<feature type="modified residue" description="Phosphoserine" evidence="1">
    <location>
        <position position="330"/>
    </location>
</feature>
<feature type="modified residue" description="Phosphoserine" evidence="1">
    <location>
        <position position="345"/>
    </location>
</feature>
<feature type="modified residue" description="Phosphoserine" evidence="14">
    <location>
        <position position="361"/>
    </location>
</feature>
<feature type="modified residue" description="Phosphoserine" evidence="1">
    <location>
        <position position="374"/>
    </location>
</feature>
<feature type="modified residue" description="Phosphoserine" evidence="15">
    <location>
        <position position="706"/>
    </location>
</feature>
<feature type="modified residue" description="Phosphoserine" evidence="15">
    <location>
        <position position="709"/>
    </location>
</feature>
<feature type="modified residue" description="Phosphoserine" evidence="1">
    <location>
        <position position="717"/>
    </location>
</feature>
<feature type="modified residue" description="Phosphoserine" evidence="1">
    <location>
        <position position="1315"/>
    </location>
</feature>
<feature type="modified residue" description="N6-acetyllysine" evidence="16">
    <location>
        <position position="1331"/>
    </location>
</feature>
<feature type="modified residue" description="Phosphoserine" evidence="1">
    <location>
        <position position="1338"/>
    </location>
</feature>
<feature type="modified residue" description="Phosphoserine" evidence="14 15">
    <location>
        <position position="1464"/>
    </location>
</feature>
<feature type="modified residue" description="Phosphoserine" evidence="15">
    <location>
        <position position="1466"/>
    </location>
</feature>
<feature type="modified residue" description="Phosphoserine" evidence="15">
    <location>
        <position position="1468"/>
    </location>
</feature>
<feature type="cross-link" description="Glycyl lysine isopeptide (Lys-Gly) (interchain with G-Cter in SUMO1); alternate" evidence="1">
    <location>
        <position position="827"/>
    </location>
</feature>
<feature type="cross-link" description="Glycyl lysine isopeptide (Lys-Gly) (interchain with G-Cter in SUMO2); alternate" evidence="1">
    <location>
        <position position="827"/>
    </location>
</feature>
<feature type="cross-link" description="Glycyl lysine isopeptide (Lys-Gly) (interchain with G-Cter in SUMO2)" evidence="1">
    <location>
        <position position="854"/>
    </location>
</feature>
<feature type="cross-link" description="Glycyl lysine isopeptide (Lys-Gly) (interchain with G-Cter in SUMO2)" evidence="1">
    <location>
        <position position="1043"/>
    </location>
</feature>
<feature type="cross-link" description="Glycyl lysine isopeptide (Lys-Gly) (interchain with G-Cter in SUMO2)" evidence="1">
    <location>
        <position position="1089"/>
    </location>
</feature>
<feature type="cross-link" description="Glycyl lysine isopeptide (Lys-Gly) (interchain with G-Cter in SUMO2)" evidence="1">
    <location>
        <position position="1107"/>
    </location>
</feature>
<feature type="splice variant" id="VSP_037470" description="In isoform 2." evidence="11">
    <location>
        <begin position="1"/>
        <end position="298"/>
    </location>
</feature>
<feature type="sequence conflict" description="In Ref. 1; AAD08676." evidence="12" ref="1">
    <original>S</original>
    <variation>R</variation>
    <location>
        <position position="957"/>
    </location>
</feature>
<feature type="sequence conflict" description="In Ref. 1; AAD08676." evidence="12" ref="1">
    <original>L</original>
    <variation>F</variation>
    <location>
        <position position="1017"/>
    </location>
</feature>
<feature type="sequence conflict" description="In Ref. 1; AAD08676." evidence="12" ref="1">
    <original>SIYL</original>
    <variation>CNYM</variation>
    <location>
        <begin position="1031"/>
        <end position="1034"/>
    </location>
</feature>
<dbReference type="EC" id="2.7.10.2" evidence="1"/>
<dbReference type="EMBL" id="AF084480">
    <property type="protein sequence ID" value="AAD08676.1"/>
    <property type="molecule type" value="mRNA"/>
</dbReference>
<dbReference type="EMBL" id="CH466529">
    <property type="protein sequence ID" value="EDL19376.1"/>
    <property type="molecule type" value="Genomic_DNA"/>
</dbReference>
<dbReference type="EMBL" id="BC141399">
    <property type="protein sequence ID" value="AAI41400.1"/>
    <property type="molecule type" value="mRNA"/>
</dbReference>
<dbReference type="EMBL" id="AK017894">
    <property type="protein sequence ID" value="BAB30992.1"/>
    <property type="molecule type" value="mRNA"/>
</dbReference>
<dbReference type="EMBL" id="AK037737">
    <property type="protein sequence ID" value="BAC29862.1"/>
    <property type="molecule type" value="mRNA"/>
</dbReference>
<dbReference type="EMBL" id="AK137139">
    <property type="protein sequence ID" value="BAE23247.1"/>
    <property type="molecule type" value="mRNA"/>
</dbReference>
<dbReference type="EMBL" id="AK140172">
    <property type="protein sequence ID" value="BAE24264.1"/>
    <property type="molecule type" value="mRNA"/>
</dbReference>
<dbReference type="EMBL" id="AK141305">
    <property type="protein sequence ID" value="BAE24643.1"/>
    <property type="molecule type" value="mRNA"/>
</dbReference>
<dbReference type="CCDS" id="CCDS19736.1">
    <molecule id="Q9Z277-1"/>
</dbReference>
<dbReference type="PIR" id="T17401">
    <property type="entry name" value="T17401"/>
</dbReference>
<dbReference type="RefSeq" id="NP_035844.2">
    <molecule id="Q9Z277-1"/>
    <property type="nucleotide sequence ID" value="NM_011714.2"/>
</dbReference>
<dbReference type="RefSeq" id="XP_011239182.1">
    <molecule id="Q9Z277-2"/>
    <property type="nucleotide sequence ID" value="XM_011240880.3"/>
</dbReference>
<dbReference type="SMR" id="Q9Z277"/>
<dbReference type="BioGRID" id="204552">
    <property type="interactions" value="16"/>
</dbReference>
<dbReference type="ComplexPortal" id="CPX-1133">
    <property type="entry name" value="B-WICH chromatin remodelling complex"/>
</dbReference>
<dbReference type="ComplexPortal" id="CPX-841">
    <property type="entry name" value="WICH chromatin remodelling complex"/>
</dbReference>
<dbReference type="CORUM" id="Q9Z277"/>
<dbReference type="DIP" id="DIP-36072N"/>
<dbReference type="FunCoup" id="Q9Z277">
    <property type="interactions" value="3889"/>
</dbReference>
<dbReference type="IntAct" id="Q9Z277">
    <property type="interactions" value="2"/>
</dbReference>
<dbReference type="STRING" id="10090.ENSMUSP00000002825"/>
<dbReference type="GlyGen" id="Q9Z277">
    <property type="glycosylation" value="1 site, 1 O-linked glycan (1 site)"/>
</dbReference>
<dbReference type="iPTMnet" id="Q9Z277"/>
<dbReference type="PhosphoSitePlus" id="Q9Z277"/>
<dbReference type="SwissPalm" id="Q9Z277"/>
<dbReference type="jPOST" id="Q9Z277"/>
<dbReference type="PaxDb" id="10090-ENSMUSP00000002825"/>
<dbReference type="PeptideAtlas" id="Q9Z277"/>
<dbReference type="ProteomicsDB" id="277180">
    <molecule id="Q9Z277-1"/>
</dbReference>
<dbReference type="ProteomicsDB" id="277181">
    <molecule id="Q9Z277-2"/>
</dbReference>
<dbReference type="Pumba" id="Q9Z277"/>
<dbReference type="Antibodypedia" id="14309">
    <property type="antibodies" value="289 antibodies from 32 providers"/>
</dbReference>
<dbReference type="DNASU" id="22385"/>
<dbReference type="Ensembl" id="ENSMUST00000002825.6">
    <molecule id="Q9Z277-1"/>
    <property type="protein sequence ID" value="ENSMUSP00000002825.6"/>
    <property type="gene ID" value="ENSMUSG00000002748.8"/>
</dbReference>
<dbReference type="GeneID" id="22385"/>
<dbReference type="KEGG" id="mmu:22385"/>
<dbReference type="UCSC" id="uc008zxz.2">
    <molecule id="Q9Z277-1"/>
    <property type="organism name" value="mouse"/>
</dbReference>
<dbReference type="AGR" id="MGI:1353499"/>
<dbReference type="CTD" id="9031"/>
<dbReference type="MGI" id="MGI:1353499">
    <property type="gene designation" value="Baz1b"/>
</dbReference>
<dbReference type="VEuPathDB" id="HostDB:ENSMUSG00000002748"/>
<dbReference type="eggNOG" id="KOG1245">
    <property type="taxonomic scope" value="Eukaryota"/>
</dbReference>
<dbReference type="GeneTree" id="ENSGT00940000156831"/>
<dbReference type="HOGENOM" id="CLU_004410_0_0_1"/>
<dbReference type="InParanoid" id="Q9Z277"/>
<dbReference type="OMA" id="KVCRRKV"/>
<dbReference type="OrthoDB" id="787137at2759"/>
<dbReference type="PhylomeDB" id="Q9Z277"/>
<dbReference type="TreeFam" id="TF106397"/>
<dbReference type="Reactome" id="R-MMU-5250924">
    <property type="pathway name" value="B-WICH complex positively regulates rRNA expression"/>
</dbReference>
<dbReference type="Reactome" id="R-MMU-5693565">
    <property type="pathway name" value="Recruitment and ATM-mediated phosphorylation of repair and signaling proteins at DNA double strand breaks"/>
</dbReference>
<dbReference type="BioGRID-ORCS" id="22385">
    <property type="hits" value="16 hits in 118 CRISPR screens"/>
</dbReference>
<dbReference type="ChiTaRS" id="Baz1b">
    <property type="organism name" value="mouse"/>
</dbReference>
<dbReference type="PRO" id="PR:Q9Z277"/>
<dbReference type="Proteomes" id="UP000000589">
    <property type="component" value="Chromosome 5"/>
</dbReference>
<dbReference type="RNAct" id="Q9Z277">
    <property type="molecule type" value="protein"/>
</dbReference>
<dbReference type="Bgee" id="ENSMUSG00000002748">
    <property type="expression patterns" value="Expressed in ileal epithelium and 263 other cell types or tissues"/>
</dbReference>
<dbReference type="GO" id="GO:0110016">
    <property type="term" value="C:B-WICH complex"/>
    <property type="evidence" value="ECO:0000266"/>
    <property type="project" value="ComplexPortal"/>
</dbReference>
<dbReference type="GO" id="GO:0000793">
    <property type="term" value="C:condensed chromosome"/>
    <property type="evidence" value="ECO:0000314"/>
    <property type="project" value="MGI"/>
</dbReference>
<dbReference type="GO" id="GO:0043596">
    <property type="term" value="C:nuclear replication fork"/>
    <property type="evidence" value="ECO:0007669"/>
    <property type="project" value="Ensembl"/>
</dbReference>
<dbReference type="GO" id="GO:0005730">
    <property type="term" value="C:nucleolus"/>
    <property type="evidence" value="ECO:0000303"/>
    <property type="project" value="ComplexPortal"/>
</dbReference>
<dbReference type="GO" id="GO:0005654">
    <property type="term" value="C:nucleoplasm"/>
    <property type="evidence" value="ECO:0007669"/>
    <property type="project" value="Ensembl"/>
</dbReference>
<dbReference type="GO" id="GO:0005634">
    <property type="term" value="C:nucleus"/>
    <property type="evidence" value="ECO:0000314"/>
    <property type="project" value="ComplexPortal"/>
</dbReference>
<dbReference type="GO" id="GO:0005721">
    <property type="term" value="C:pericentric heterochromatin"/>
    <property type="evidence" value="ECO:0000314"/>
    <property type="project" value="ComplexPortal"/>
</dbReference>
<dbReference type="GO" id="GO:0090535">
    <property type="term" value="C:WICH complex"/>
    <property type="evidence" value="ECO:0000266"/>
    <property type="project" value="ComplexPortal"/>
</dbReference>
<dbReference type="GO" id="GO:0005524">
    <property type="term" value="F:ATP binding"/>
    <property type="evidence" value="ECO:0007669"/>
    <property type="project" value="UniProtKB-KW"/>
</dbReference>
<dbReference type="GO" id="GO:0042393">
    <property type="term" value="F:histone binding"/>
    <property type="evidence" value="ECO:0000353"/>
    <property type="project" value="UniProtKB"/>
</dbReference>
<dbReference type="GO" id="GO:0140801">
    <property type="term" value="F:histone H2AXY142 kinase activity"/>
    <property type="evidence" value="ECO:0000250"/>
    <property type="project" value="UniProtKB"/>
</dbReference>
<dbReference type="GO" id="GO:0004715">
    <property type="term" value="F:non-membrane spanning protein tyrosine kinase activity"/>
    <property type="evidence" value="ECO:0007669"/>
    <property type="project" value="UniProtKB-EC"/>
</dbReference>
<dbReference type="GO" id="GO:0008270">
    <property type="term" value="F:zinc ion binding"/>
    <property type="evidence" value="ECO:0007669"/>
    <property type="project" value="UniProtKB-KW"/>
</dbReference>
<dbReference type="GO" id="GO:0006325">
    <property type="term" value="P:chromatin organization"/>
    <property type="evidence" value="ECO:0000314"/>
    <property type="project" value="MGI"/>
</dbReference>
<dbReference type="GO" id="GO:0006338">
    <property type="term" value="P:chromatin remodeling"/>
    <property type="evidence" value="ECO:0000314"/>
    <property type="project" value="ComplexPortal"/>
</dbReference>
<dbReference type="GO" id="GO:0006974">
    <property type="term" value="P:DNA damage response"/>
    <property type="evidence" value="ECO:0000250"/>
    <property type="project" value="UniProtKB"/>
</dbReference>
<dbReference type="GO" id="GO:1905213">
    <property type="term" value="P:negative regulation of mitotic chromosome condensation"/>
    <property type="evidence" value="ECO:0000266"/>
    <property type="project" value="ComplexPortal"/>
</dbReference>
<dbReference type="GO" id="GO:0045943">
    <property type="term" value="P:positive regulation of transcription by RNA polymerase I"/>
    <property type="evidence" value="ECO:0000303"/>
    <property type="project" value="ComplexPortal"/>
</dbReference>
<dbReference type="GO" id="GO:0045944">
    <property type="term" value="P:positive regulation of transcription by RNA polymerase II"/>
    <property type="evidence" value="ECO:0000303"/>
    <property type="project" value="ComplexPortal"/>
</dbReference>
<dbReference type="GO" id="GO:0045945">
    <property type="term" value="P:positive regulation of transcription by RNA polymerase III"/>
    <property type="evidence" value="ECO:0000266"/>
    <property type="project" value="ComplexPortal"/>
</dbReference>
<dbReference type="GO" id="GO:0043687">
    <property type="term" value="P:post-translational protein modification"/>
    <property type="evidence" value="ECO:0000250"/>
    <property type="project" value="UniProtKB"/>
</dbReference>
<dbReference type="CDD" id="cd05505">
    <property type="entry name" value="Bromo_WSTF_like"/>
    <property type="match status" value="1"/>
</dbReference>
<dbReference type="CDD" id="cd15628">
    <property type="entry name" value="PHD_BAZ1B"/>
    <property type="match status" value="1"/>
</dbReference>
<dbReference type="FunFam" id="1.20.920.10:FF:000031">
    <property type="entry name" value="Bromodomain adjacent to zinc finger domain, 1B"/>
    <property type="match status" value="1"/>
</dbReference>
<dbReference type="FunFam" id="3.30.40.10:FF:000131">
    <property type="entry name" value="tyrosine-protein kinase BAZ1B isoform X1"/>
    <property type="match status" value="1"/>
</dbReference>
<dbReference type="Gene3D" id="1.20.920.10">
    <property type="entry name" value="Bromodomain-like"/>
    <property type="match status" value="1"/>
</dbReference>
<dbReference type="Gene3D" id="3.30.40.10">
    <property type="entry name" value="Zinc/RING finger domain, C3HC4 (zinc finger)"/>
    <property type="match status" value="1"/>
</dbReference>
<dbReference type="InterPro" id="IPR047174">
    <property type="entry name" value="BAZ1B"/>
</dbReference>
<dbReference type="InterPro" id="IPR037375">
    <property type="entry name" value="BAZ1B_Bromo"/>
</dbReference>
<dbReference type="InterPro" id="IPR047256">
    <property type="entry name" value="BAZ1B_PHD"/>
</dbReference>
<dbReference type="InterPro" id="IPR001487">
    <property type="entry name" value="Bromodomain"/>
</dbReference>
<dbReference type="InterPro" id="IPR036427">
    <property type="entry name" value="Bromodomain-like_sf"/>
</dbReference>
<dbReference type="InterPro" id="IPR018359">
    <property type="entry name" value="Bromodomain_CS"/>
</dbReference>
<dbReference type="InterPro" id="IPR018501">
    <property type="entry name" value="DDT_dom"/>
</dbReference>
<dbReference type="InterPro" id="IPR028942">
    <property type="entry name" value="WHIM1_dom"/>
</dbReference>
<dbReference type="InterPro" id="IPR028941">
    <property type="entry name" value="WHIM2_dom"/>
</dbReference>
<dbReference type="InterPro" id="IPR013136">
    <property type="entry name" value="WSTF_Acf1_Cbp146"/>
</dbReference>
<dbReference type="InterPro" id="IPR019786">
    <property type="entry name" value="Zinc_finger_PHD-type_CS"/>
</dbReference>
<dbReference type="InterPro" id="IPR011011">
    <property type="entry name" value="Znf_FYVE_PHD"/>
</dbReference>
<dbReference type="InterPro" id="IPR001965">
    <property type="entry name" value="Znf_PHD"/>
</dbReference>
<dbReference type="InterPro" id="IPR019787">
    <property type="entry name" value="Znf_PHD-finger"/>
</dbReference>
<dbReference type="InterPro" id="IPR001841">
    <property type="entry name" value="Znf_RING"/>
</dbReference>
<dbReference type="InterPro" id="IPR013083">
    <property type="entry name" value="Znf_RING/FYVE/PHD"/>
</dbReference>
<dbReference type="PANTHER" id="PTHR46802">
    <property type="entry name" value="TYROSINE-PROTEIN KINASE BAZ1B"/>
    <property type="match status" value="1"/>
</dbReference>
<dbReference type="PANTHER" id="PTHR46802:SF1">
    <property type="entry name" value="TYROSINE-PROTEIN KINASE BAZ1B"/>
    <property type="match status" value="1"/>
</dbReference>
<dbReference type="Pfam" id="PF00439">
    <property type="entry name" value="Bromodomain"/>
    <property type="match status" value="1"/>
</dbReference>
<dbReference type="Pfam" id="PF00628">
    <property type="entry name" value="PHD"/>
    <property type="match status" value="1"/>
</dbReference>
<dbReference type="Pfam" id="PF10537">
    <property type="entry name" value="WAC_Acf1_DNA_bd"/>
    <property type="match status" value="1"/>
</dbReference>
<dbReference type="Pfam" id="PF15612">
    <property type="entry name" value="WHIM1"/>
    <property type="match status" value="1"/>
</dbReference>
<dbReference type="Pfam" id="PF15613">
    <property type="entry name" value="WSD"/>
    <property type="match status" value="1"/>
</dbReference>
<dbReference type="PRINTS" id="PR00503">
    <property type="entry name" value="BROMODOMAIN"/>
</dbReference>
<dbReference type="SMART" id="SM00297">
    <property type="entry name" value="BROMO"/>
    <property type="match status" value="1"/>
</dbReference>
<dbReference type="SMART" id="SM00571">
    <property type="entry name" value="DDT"/>
    <property type="match status" value="1"/>
</dbReference>
<dbReference type="SMART" id="SM00249">
    <property type="entry name" value="PHD"/>
    <property type="match status" value="1"/>
</dbReference>
<dbReference type="SUPFAM" id="SSF47370">
    <property type="entry name" value="Bromodomain"/>
    <property type="match status" value="1"/>
</dbReference>
<dbReference type="SUPFAM" id="SSF57903">
    <property type="entry name" value="FYVE/PHD zinc finger"/>
    <property type="match status" value="1"/>
</dbReference>
<dbReference type="PROSITE" id="PS00633">
    <property type="entry name" value="BROMODOMAIN_1"/>
    <property type="match status" value="1"/>
</dbReference>
<dbReference type="PROSITE" id="PS50014">
    <property type="entry name" value="BROMODOMAIN_2"/>
    <property type="match status" value="1"/>
</dbReference>
<dbReference type="PROSITE" id="PS50827">
    <property type="entry name" value="DDT"/>
    <property type="match status" value="1"/>
</dbReference>
<dbReference type="PROSITE" id="PS51136">
    <property type="entry name" value="WAC"/>
    <property type="match status" value="1"/>
</dbReference>
<dbReference type="PROSITE" id="PS01359">
    <property type="entry name" value="ZF_PHD_1"/>
    <property type="match status" value="1"/>
</dbReference>
<dbReference type="PROSITE" id="PS50016">
    <property type="entry name" value="ZF_PHD_2"/>
    <property type="match status" value="1"/>
</dbReference>
<gene>
    <name type="primary">Baz1b</name>
    <name type="synonym">Wbscr9</name>
    <name type="synonym">Wstf</name>
</gene>
<accession>Q9Z277</accession>
<accession>B9EJ99</accession>
<accession>Q3URP5</accession>
<accession>Q3USR7</accession>
<accession>Q3UVM2</accession>
<accession>Q8CAU9</accession>
<accession>Q9CU68</accession>
<comment type="function">
    <text evidence="1 8 9 10">Atypical tyrosine-protein kinase that plays a central role in chromatin remodeling and acts as a transcription regulator (By similarity). Involved in DNA damage response by phosphorylating 'Tyr-142' of histone H2AX (H2AXY142ph) (PubMed:19092802). H2AXY142ph plays a central role in DNA repair and acts as a mark that distinguishes between apoptotic and repair responses to genotoxic stress (PubMed:19092802). Regulatory subunit of the ATP-dependent WICH-1 and WICH-5 ISWI chromatin remodeling complexes, which form ordered nucleosome arrays on chromatin and facilitate access to DNA during DNA-templated processes such as DNA replication, transcription, and repair (PubMed:11980720). Both complexes regulate the spacing of nucleosomes along the chromatin and have the ability to slide mononucleosomes to the center of a DNA template (PubMed:16514417). The WICH-1 ISWI chromatin remodeling complex has a lower ATP hydrolysis rate than the WICH-5 ISWI chromatin remodeling complex (By similarity). The WICH-5 ISWI chromatin remodeling complex regulates the transcription of various genes, has a role in RNA polymerase I transcription (PubMed:16514417). Within the B-WICH complex has a role in RNA polymerase III transcription (By similarity). Mediates the recruitment of the WICH-5 ISWI chromatin remodeling complex to replication foci during DNA replication (By similarity).</text>
</comment>
<comment type="catalytic activity">
    <reaction evidence="1">
        <text>L-tyrosyl-[protein] + ATP = O-phospho-L-tyrosyl-[protein] + ADP + H(+)</text>
        <dbReference type="Rhea" id="RHEA:10596"/>
        <dbReference type="Rhea" id="RHEA-COMP:10136"/>
        <dbReference type="Rhea" id="RHEA-COMP:20101"/>
        <dbReference type="ChEBI" id="CHEBI:15378"/>
        <dbReference type="ChEBI" id="CHEBI:30616"/>
        <dbReference type="ChEBI" id="CHEBI:46858"/>
        <dbReference type="ChEBI" id="CHEBI:61978"/>
        <dbReference type="ChEBI" id="CHEBI:456216"/>
        <dbReference type="EC" id="2.7.10.2"/>
    </reaction>
</comment>
<comment type="cofactor">
    <cofactor evidence="1">
        <name>Mn(2+)</name>
        <dbReference type="ChEBI" id="CHEBI:29035"/>
    </cofactor>
</comment>
<comment type="subunit">
    <text evidence="1 9 10">Component of the WICH-1 ISWI chromatin remodeling complex, at least composed of SMARCA1 and BAZ1B/WSTF, which regulates the spacing of histone octamers on the DNA template to facilitate access to DNA (By similarity). Within the WICH-1 ISWI chromatin remodeling complex interacts with SMARCA1; the interaction is direct (By similarity). Component of the WICH-5 ISWI chromatin remodeling complex (also called the WICH complex), at least composed of SMARCA5/SNF2H and BAZ1B/WSTF, which regulates the spacing of histone octamers on the DNA template to facilitate access to DNA (PubMed:16514417). Within the WICH-5 ISWI chromatin remodeling complex interacts with SMARCA5/SNF2H; the interaction is direct (PubMed:16514417, PubMed:19092802). Component of the B-WICH chromatin remodeling complex, at least composed of SMARCA5/SNF2H, BAZ1B/WSTF, SF3B1, DEK, MYO1C, ERCC6, MYBBP1A and DDX21 (By similarity). Within the B-WICH chromatin remodeling complex, interacts with SMARCA5/SNF2H, DDX21, DEK, MYBBP1A, SF3B1 and ERCC6 (By similarity). Interacts with MYO1C (PubMed:16514417). Interacts with PCNA; the interaction is direct and is required for BAZ1B/WSTF binding to replication foci during S phase (By similarity). Interacts with CDT1 (By similarity).</text>
</comment>
<comment type="interaction">
    <interactant intactId="EBI-927576">
        <id>Q9Z277</id>
    </interactant>
    <interactant intactId="EBI-927547">
        <id>Q91ZW3</id>
        <label>Smarca5</label>
    </interactant>
    <organismsDiffer>false</organismsDiffer>
    <experiments>2</experiments>
</comment>
<comment type="subcellular location">
    <subcellularLocation>
        <location evidence="4 6">Nucleus</location>
    </subcellularLocation>
    <text evidence="1">Accumulates in pericentromeric heterochromatin during replication. Targeted to replication foci throughout S phase via its association with PCNA (By similarity). Localizes to sites of DNA damage (By similarity).</text>
</comment>
<comment type="alternative products">
    <event type="alternative splicing"/>
    <isoform>
        <id>Q9Z277-1</id>
        <name>1</name>
        <sequence type="displayed"/>
    </isoform>
    <isoform>
        <id>Q9Z277-2</id>
        <name>2</name>
        <sequence type="described" ref="VSP_037470"/>
    </isoform>
</comment>
<comment type="developmental stage">
    <text>Expressed as early as day 7 and in equal amounts during gestation.</text>
</comment>
<comment type="similarity">
    <text evidence="12">Belongs to the WAL family. BAZ1B subfamily.</text>
</comment>